<proteinExistence type="inferred from homology"/>
<accession>Q5H392</accession>
<evidence type="ECO:0000255" key="1">
    <source>
        <dbReference type="HAMAP-Rule" id="MF_00385"/>
    </source>
</evidence>
<evidence type="ECO:0000305" key="2"/>
<gene>
    <name evidence="1" type="primary">rpsP</name>
    <name type="ordered locus">XOO1325</name>
</gene>
<name>RS16_XANOR</name>
<feature type="chain" id="PRO_0000243895" description="Small ribosomal subunit protein bS16">
    <location>
        <begin position="1"/>
        <end position="85"/>
    </location>
</feature>
<protein>
    <recommendedName>
        <fullName evidence="1">Small ribosomal subunit protein bS16</fullName>
    </recommendedName>
    <alternativeName>
        <fullName evidence="2">30S ribosomal protein S16</fullName>
    </alternativeName>
</protein>
<organism>
    <name type="scientific">Xanthomonas oryzae pv. oryzae (strain KACC10331 / KXO85)</name>
    <dbReference type="NCBI Taxonomy" id="291331"/>
    <lineage>
        <taxon>Bacteria</taxon>
        <taxon>Pseudomonadati</taxon>
        <taxon>Pseudomonadota</taxon>
        <taxon>Gammaproteobacteria</taxon>
        <taxon>Lysobacterales</taxon>
        <taxon>Lysobacteraceae</taxon>
        <taxon>Xanthomonas</taxon>
    </lineage>
</organism>
<comment type="similarity">
    <text evidence="1">Belongs to the bacterial ribosomal protein bS16 family.</text>
</comment>
<comment type="sequence caution" evidence="2">
    <conflict type="erroneous initiation">
        <sequence resource="EMBL-CDS" id="AAW74579"/>
    </conflict>
</comment>
<reference key="1">
    <citation type="journal article" date="2005" name="Nucleic Acids Res.">
        <title>The genome sequence of Xanthomonas oryzae pathovar oryzae KACC10331, the bacterial blight pathogen of rice.</title>
        <authorList>
            <person name="Lee B.-M."/>
            <person name="Park Y.-J."/>
            <person name="Park D.-S."/>
            <person name="Kang H.-W."/>
            <person name="Kim J.-G."/>
            <person name="Song E.-S."/>
            <person name="Park I.-C."/>
            <person name="Yoon U.-H."/>
            <person name="Hahn J.-H."/>
            <person name="Koo B.-S."/>
            <person name="Lee G.-B."/>
            <person name="Kim H."/>
            <person name="Park H.-S."/>
            <person name="Yoon K.-O."/>
            <person name="Kim J.-H."/>
            <person name="Jung C.-H."/>
            <person name="Koh N.-H."/>
            <person name="Seo J.-S."/>
            <person name="Go S.-J."/>
        </authorList>
    </citation>
    <scope>NUCLEOTIDE SEQUENCE [LARGE SCALE GENOMIC DNA]</scope>
    <source>
        <strain>KACC10331 / KXO85</strain>
    </source>
</reference>
<keyword id="KW-1185">Reference proteome</keyword>
<keyword id="KW-0687">Ribonucleoprotein</keyword>
<keyword id="KW-0689">Ribosomal protein</keyword>
<sequence>MVKIRLTRGGAKKRPFYHIIVTDVRSARDGRNIERLGYYNPVAQGAEPRVVLDTARVDHWVGNGAQLTDKVRNLYREAKSQAAAA</sequence>
<dbReference type="EMBL" id="AE013598">
    <property type="protein sequence ID" value="AAW74579.1"/>
    <property type="status" value="ALT_INIT"/>
    <property type="molecule type" value="Genomic_DNA"/>
</dbReference>
<dbReference type="SMR" id="Q5H392"/>
<dbReference type="STRING" id="291331.XOO1325"/>
<dbReference type="KEGG" id="xoo:XOO1325"/>
<dbReference type="HOGENOM" id="CLU_1958713_0_0_6"/>
<dbReference type="Proteomes" id="UP000006735">
    <property type="component" value="Chromosome"/>
</dbReference>
<dbReference type="GO" id="GO:0005737">
    <property type="term" value="C:cytoplasm"/>
    <property type="evidence" value="ECO:0007669"/>
    <property type="project" value="UniProtKB-ARBA"/>
</dbReference>
<dbReference type="GO" id="GO:0015935">
    <property type="term" value="C:small ribosomal subunit"/>
    <property type="evidence" value="ECO:0007669"/>
    <property type="project" value="TreeGrafter"/>
</dbReference>
<dbReference type="GO" id="GO:0003735">
    <property type="term" value="F:structural constituent of ribosome"/>
    <property type="evidence" value="ECO:0007669"/>
    <property type="project" value="InterPro"/>
</dbReference>
<dbReference type="GO" id="GO:0006412">
    <property type="term" value="P:translation"/>
    <property type="evidence" value="ECO:0007669"/>
    <property type="project" value="UniProtKB-UniRule"/>
</dbReference>
<dbReference type="FunFam" id="3.30.1320.10:FF:000008">
    <property type="entry name" value="30S ribosomal protein S16"/>
    <property type="match status" value="1"/>
</dbReference>
<dbReference type="Gene3D" id="3.30.1320.10">
    <property type="match status" value="1"/>
</dbReference>
<dbReference type="HAMAP" id="MF_00385">
    <property type="entry name" value="Ribosomal_bS16"/>
    <property type="match status" value="1"/>
</dbReference>
<dbReference type="InterPro" id="IPR000307">
    <property type="entry name" value="Ribosomal_bS16"/>
</dbReference>
<dbReference type="InterPro" id="IPR020592">
    <property type="entry name" value="Ribosomal_bS16_CS"/>
</dbReference>
<dbReference type="InterPro" id="IPR023803">
    <property type="entry name" value="Ribosomal_bS16_dom_sf"/>
</dbReference>
<dbReference type="NCBIfam" id="TIGR00002">
    <property type="entry name" value="S16"/>
    <property type="match status" value="1"/>
</dbReference>
<dbReference type="PANTHER" id="PTHR12919">
    <property type="entry name" value="30S RIBOSOMAL PROTEIN S16"/>
    <property type="match status" value="1"/>
</dbReference>
<dbReference type="PANTHER" id="PTHR12919:SF20">
    <property type="entry name" value="SMALL RIBOSOMAL SUBUNIT PROTEIN BS16M"/>
    <property type="match status" value="1"/>
</dbReference>
<dbReference type="Pfam" id="PF00886">
    <property type="entry name" value="Ribosomal_S16"/>
    <property type="match status" value="1"/>
</dbReference>
<dbReference type="SUPFAM" id="SSF54565">
    <property type="entry name" value="Ribosomal protein S16"/>
    <property type="match status" value="1"/>
</dbReference>
<dbReference type="PROSITE" id="PS00732">
    <property type="entry name" value="RIBOSOMAL_S16"/>
    <property type="match status" value="1"/>
</dbReference>